<reference key="1">
    <citation type="journal article" date="2004" name="Nature">
        <title>Genome evolution in yeasts.</title>
        <authorList>
            <person name="Dujon B."/>
            <person name="Sherman D."/>
            <person name="Fischer G."/>
            <person name="Durrens P."/>
            <person name="Casaregola S."/>
            <person name="Lafontaine I."/>
            <person name="de Montigny J."/>
            <person name="Marck C."/>
            <person name="Neuveglise C."/>
            <person name="Talla E."/>
            <person name="Goffard N."/>
            <person name="Frangeul L."/>
            <person name="Aigle M."/>
            <person name="Anthouard V."/>
            <person name="Babour A."/>
            <person name="Barbe V."/>
            <person name="Barnay S."/>
            <person name="Blanchin S."/>
            <person name="Beckerich J.-M."/>
            <person name="Beyne E."/>
            <person name="Bleykasten C."/>
            <person name="Boisrame A."/>
            <person name="Boyer J."/>
            <person name="Cattolico L."/>
            <person name="Confanioleri F."/>
            <person name="de Daruvar A."/>
            <person name="Despons L."/>
            <person name="Fabre E."/>
            <person name="Fairhead C."/>
            <person name="Ferry-Dumazet H."/>
            <person name="Groppi A."/>
            <person name="Hantraye F."/>
            <person name="Hennequin C."/>
            <person name="Jauniaux N."/>
            <person name="Joyet P."/>
            <person name="Kachouri R."/>
            <person name="Kerrest A."/>
            <person name="Koszul R."/>
            <person name="Lemaire M."/>
            <person name="Lesur I."/>
            <person name="Ma L."/>
            <person name="Muller H."/>
            <person name="Nicaud J.-M."/>
            <person name="Nikolski M."/>
            <person name="Oztas S."/>
            <person name="Ozier-Kalogeropoulos O."/>
            <person name="Pellenz S."/>
            <person name="Potier S."/>
            <person name="Richard G.-F."/>
            <person name="Straub M.-L."/>
            <person name="Suleau A."/>
            <person name="Swennen D."/>
            <person name="Tekaia F."/>
            <person name="Wesolowski-Louvel M."/>
            <person name="Westhof E."/>
            <person name="Wirth B."/>
            <person name="Zeniou-Meyer M."/>
            <person name="Zivanovic Y."/>
            <person name="Bolotin-Fukuhara M."/>
            <person name="Thierry A."/>
            <person name="Bouchier C."/>
            <person name="Caudron B."/>
            <person name="Scarpelli C."/>
            <person name="Gaillardin C."/>
            <person name="Weissenbach J."/>
            <person name="Wincker P."/>
            <person name="Souciet J.-L."/>
        </authorList>
    </citation>
    <scope>NUCLEOTIDE SEQUENCE [LARGE SCALE GENOMIC DNA]</scope>
    <source>
        <strain>CLIB 122 / E 150</strain>
    </source>
</reference>
<evidence type="ECO:0000250" key="1"/>
<evidence type="ECO:0000305" key="2"/>
<name>ATG3_YARLI</name>
<comment type="function">
    <text evidence="1">E2 conjugating enzyme required for the cytoplasm to vacuole transport (Cvt) and autophagy. Required for selective autophagic degradation of the nucleus (nucleophagy) as well as for mitophagy which contributes to regulate mitochondrial quantity and quality by eliminating the mitochondria to a basal level to fulfill cellular energy requirements and preventing excess ROS production. Responsible for the E2-like covalent binding of phosphatidylethanolamine to the C-terminal Gly of ATG8. The ATG12-ATG5 conjugate plays a role of an E3 and promotes the transfer of ATG8 from ATG3 to phosphatidylethanolamine (PE). This step is required for the membrane association of ATG8. The formation of the ATG8-phosphatidylethanolamine conjugate is essential for autophagy and for the cytoplasm to vacuole transport (Cvt). The ATG8-PE conjugate mediates tethering between adjacent membranes and stimulates membrane hemifusion, leading to expansion of the autophagosomal membrane during autophagy (By similarity).</text>
</comment>
<comment type="subunit">
    <text evidence="1">Monomer. Interacts with ATG8 through an intermediate thioester bond through the C-terminal Gly of ATG8. Also interacts with the 40 amino acid C-terminal region of the E1-like ATG7 enzyme. Also interacts with the ATG12-ATG5 conjugate.</text>
</comment>
<comment type="subcellular location">
    <subcellularLocation>
        <location evidence="1">Cytoplasm</location>
    </subcellularLocation>
</comment>
<comment type="domain">
    <text evidence="1">The N-terminal region is involved in phosphatidylethanolamine-binding and is required for ATG8-PE conjugation.</text>
</comment>
<comment type="domain">
    <text evidence="1">The flexible region (FR) is required for ATG7-binding.</text>
</comment>
<comment type="domain">
    <text evidence="1">The handle region (HR) contains the ATG8 interaction motif (AIM) and mediates binding to ATG8. It is crucial for the cytoplasm-to-vacuole targeting pathway (By similarity).</text>
</comment>
<comment type="similarity">
    <text evidence="2">Belongs to the ATG3 family.</text>
</comment>
<protein>
    <recommendedName>
        <fullName>Autophagy-related protein 3</fullName>
    </recommendedName>
    <alternativeName>
        <fullName>Autophagy-related E2-like conjugation enzyme ATG3</fullName>
    </alternativeName>
</protein>
<accession>Q6C4Q9</accession>
<dbReference type="EMBL" id="CR382131">
    <property type="protein sequence ID" value="CAG79952.1"/>
    <property type="molecule type" value="Genomic_DNA"/>
</dbReference>
<dbReference type="RefSeq" id="XP_504353.1">
    <property type="nucleotide sequence ID" value="XM_504353.1"/>
</dbReference>
<dbReference type="SMR" id="Q6C4Q9"/>
<dbReference type="FunCoup" id="Q6C4Q9">
    <property type="interactions" value="1114"/>
</dbReference>
<dbReference type="STRING" id="284591.Q6C4Q9"/>
<dbReference type="EnsemblFungi" id="CAG79952">
    <property type="protein sequence ID" value="CAG79952"/>
    <property type="gene ID" value="YALI0_E24453g"/>
</dbReference>
<dbReference type="KEGG" id="yli:2912551"/>
<dbReference type="VEuPathDB" id="FungiDB:YALI0_E24453g"/>
<dbReference type="HOGENOM" id="CLU_027518_2_0_1"/>
<dbReference type="InParanoid" id="Q6C4Q9"/>
<dbReference type="OMA" id="HCPTWSW"/>
<dbReference type="OrthoDB" id="2347at4891"/>
<dbReference type="Proteomes" id="UP000001300">
    <property type="component" value="Chromosome E"/>
</dbReference>
<dbReference type="GO" id="GO:0005829">
    <property type="term" value="C:cytosol"/>
    <property type="evidence" value="ECO:0000318"/>
    <property type="project" value="GO_Central"/>
</dbReference>
<dbReference type="GO" id="GO:0005739">
    <property type="term" value="C:mitochondrion"/>
    <property type="evidence" value="ECO:0007669"/>
    <property type="project" value="EnsemblFungi"/>
</dbReference>
<dbReference type="GO" id="GO:0061908">
    <property type="term" value="C:phagophore"/>
    <property type="evidence" value="ECO:0007669"/>
    <property type="project" value="EnsemblFungi"/>
</dbReference>
<dbReference type="GO" id="GO:0000407">
    <property type="term" value="C:phagophore assembly site"/>
    <property type="evidence" value="ECO:0000318"/>
    <property type="project" value="GO_Central"/>
</dbReference>
<dbReference type="GO" id="GO:0141046">
    <property type="term" value="F:Atg8-family conjugating enzyme activity"/>
    <property type="evidence" value="ECO:0000318"/>
    <property type="project" value="GO_Central"/>
</dbReference>
<dbReference type="GO" id="GO:0019776">
    <property type="term" value="F:Atg8-family ligase activity"/>
    <property type="evidence" value="ECO:0007669"/>
    <property type="project" value="EnsemblFungi"/>
</dbReference>
<dbReference type="GO" id="GO:0000045">
    <property type="term" value="P:autophagosome assembly"/>
    <property type="evidence" value="ECO:0000318"/>
    <property type="project" value="GO_Central"/>
</dbReference>
<dbReference type="GO" id="GO:0000422">
    <property type="term" value="P:autophagy of mitochondrion"/>
    <property type="evidence" value="ECO:0000318"/>
    <property type="project" value="GO_Central"/>
</dbReference>
<dbReference type="GO" id="GO:0032258">
    <property type="term" value="P:cytoplasm to vacuole targeting by the Cvt pathway"/>
    <property type="evidence" value="ECO:0007669"/>
    <property type="project" value="EnsemblFungi"/>
</dbReference>
<dbReference type="GO" id="GO:0061723">
    <property type="term" value="P:glycophagy"/>
    <property type="evidence" value="ECO:0000318"/>
    <property type="project" value="GO_Central"/>
</dbReference>
<dbReference type="GO" id="GO:0044804">
    <property type="term" value="P:nucleophagy"/>
    <property type="evidence" value="ECO:0000318"/>
    <property type="project" value="GO_Central"/>
</dbReference>
<dbReference type="GO" id="GO:0034727">
    <property type="term" value="P:piecemeal microautophagy of the nucleus"/>
    <property type="evidence" value="ECO:0007669"/>
    <property type="project" value="EnsemblFungi"/>
</dbReference>
<dbReference type="GO" id="GO:0006612">
    <property type="term" value="P:protein targeting to membrane"/>
    <property type="evidence" value="ECO:0007669"/>
    <property type="project" value="EnsemblFungi"/>
</dbReference>
<dbReference type="InterPro" id="IPR007135">
    <property type="entry name" value="Atg3/Atg10"/>
</dbReference>
<dbReference type="PANTHER" id="PTHR12866">
    <property type="entry name" value="UBIQUITIN-LIKE-CONJUGATING ENZYME ATG3"/>
    <property type="match status" value="1"/>
</dbReference>
<dbReference type="PANTHER" id="PTHR12866:SF2">
    <property type="entry name" value="UBIQUITIN-LIKE-CONJUGATING ENZYME ATG3"/>
    <property type="match status" value="1"/>
</dbReference>
<dbReference type="Pfam" id="PF03987">
    <property type="entry name" value="Autophagy_act_C"/>
    <property type="match status" value="1"/>
</dbReference>
<keyword id="KW-0072">Autophagy</keyword>
<keyword id="KW-0963">Cytoplasm</keyword>
<keyword id="KW-0653">Protein transport</keyword>
<keyword id="KW-1185">Reference proteome</keyword>
<keyword id="KW-0813">Transport</keyword>
<keyword id="KW-0833">Ubl conjugation pathway</keyword>
<proteinExistence type="inferred from homology"/>
<gene>
    <name type="primary">ATG3</name>
    <name type="ordered locus">YALI0E24453g</name>
</gene>
<organism>
    <name type="scientific">Yarrowia lipolytica (strain CLIB 122 / E 150)</name>
    <name type="common">Yeast</name>
    <name type="synonym">Candida lipolytica</name>
    <dbReference type="NCBI Taxonomy" id="284591"/>
    <lineage>
        <taxon>Eukaryota</taxon>
        <taxon>Fungi</taxon>
        <taxon>Dikarya</taxon>
        <taxon>Ascomycota</taxon>
        <taxon>Saccharomycotina</taxon>
        <taxon>Dipodascomycetes</taxon>
        <taxon>Dipodascales</taxon>
        <taxon>Dipodascales incertae sedis</taxon>
        <taxon>Yarrowia</taxon>
    </lineage>
</organism>
<sequence>MEAHKGKQDIFIVQVLITPTFVELNHIYPPIRLLSPPSISSNPSIKFDKTQAPPTLFIYIASYNTPDYQTTLHKSTMLHVRAAASSLREYLTPVSNTSTFRTTGEITPDEFVKAGDYLVEKFPTWSWASASKSKVRDFLPPDKQVLVTRHVPSHVRASTVSGPVTLGEEEDGWTSFGVANTKDADGDDTEEIAEIADSDFEELDDDDDDAAEAPATATDHRTYNLYIAYSTSYRVPKMFLSGYSPEGSPLTPEDMFEDIIPEYRDKTVTIERPTFQDNITMVAIHPCKHANVMRVLMERVEAKGDKDITRGVAKLGVADADDGEGEEEWEEVENSAMRVDQYLVTFLKFIASVTPGIEHDYTMSAL</sequence>
<feature type="chain" id="PRO_0000213585" description="Autophagy-related protein 3">
    <location>
        <begin position="1"/>
        <end position="366"/>
    </location>
</feature>
<feature type="region of interest" description="Flexible region" evidence="1">
    <location>
        <begin position="160"/>
        <end position="217"/>
    </location>
</feature>
<feature type="region of interest" description="Handle region" evidence="1">
    <location>
        <begin position="291"/>
        <end position="341"/>
    </location>
</feature>
<feature type="active site" description="Glycyl thioester intermediate" evidence="1">
    <location>
        <position position="287"/>
    </location>
</feature>